<sequence>MARSGFEVQKVTVEALFLREIRTRFGKFRLGYLWAILEPSAHLLILLGILGYVMHRTMPDISFPVFLLNGLIPFFIFSSISKRSIGAIEANQGLFNYRPVKPIDTIIARALLETLIYVAVYILLMLIVWMTGEYFEITNFLQLVLTWSLLIILSCGVGLIFMVVGKTFPEMQKVLPILLKPLYFISCIMFPLHSIPKQYWSYLLWNPLVHVVELSREAVMPGYISEGVSLNYLAMFTLVTLFIGLALYRTREEAMLTS</sequence>
<feature type="chain" id="PRO_0000182982" description="Polysialic acid transport protein KpsM">
    <location>
        <begin position="1"/>
        <end position="258"/>
    </location>
</feature>
<feature type="topological domain" description="Cytoplasmic" evidence="3">
    <location>
        <begin position="1"/>
        <end position="30"/>
    </location>
</feature>
<feature type="transmembrane region" description="Helical" evidence="2">
    <location>
        <begin position="31"/>
        <end position="54"/>
    </location>
</feature>
<feature type="topological domain" description="Periplasmic" evidence="3">
    <location>
        <begin position="55"/>
        <end position="61"/>
    </location>
</feature>
<feature type="transmembrane region" description="Helical" evidence="2">
    <location>
        <begin position="62"/>
        <end position="81"/>
    </location>
</feature>
<feature type="topological domain" description="Cytoplasmic" evidence="3">
    <location>
        <begin position="82"/>
        <end position="108"/>
    </location>
</feature>
<feature type="transmembrane region" description="Helical" evidence="2">
    <location>
        <begin position="109"/>
        <end position="132"/>
    </location>
</feature>
<feature type="topological domain" description="Periplasmic" evidence="3">
    <location>
        <begin position="133"/>
        <end position="143"/>
    </location>
</feature>
<feature type="transmembrane region" description="Helical" evidence="2">
    <location>
        <begin position="144"/>
        <end position="165"/>
    </location>
</feature>
<feature type="topological domain" description="Cytoplasmic" evidence="3">
    <location>
        <begin position="166"/>
        <end position="174"/>
    </location>
</feature>
<feature type="transmembrane region" description="Helical" evidence="2">
    <location>
        <begin position="175"/>
        <end position="195"/>
    </location>
</feature>
<feature type="topological domain" description="Periplasmic" evidence="3">
    <location>
        <begin position="196"/>
        <end position="226"/>
    </location>
</feature>
<feature type="transmembrane region" description="Helical" evidence="2">
    <location>
        <begin position="227"/>
        <end position="247"/>
    </location>
</feature>
<feature type="topological domain" description="Cytoplasmic" evidence="3">
    <location>
        <begin position="248"/>
        <end position="258"/>
    </location>
</feature>
<feature type="domain" description="ABC transmembrane type-2" evidence="1">
    <location>
        <begin position="30"/>
        <end position="251"/>
    </location>
</feature>
<dbReference type="EMBL" id="M57382">
    <property type="protein sequence ID" value="AAA24046.1"/>
    <property type="molecule type" value="Genomic_DNA"/>
</dbReference>
<dbReference type="PIR" id="A42469">
    <property type="entry name" value="A42469"/>
</dbReference>
<dbReference type="RefSeq" id="WP_000124301.1">
    <property type="nucleotide sequence ID" value="NZ_WVVR01000003.1"/>
</dbReference>
<dbReference type="SMR" id="P23889"/>
<dbReference type="OMA" id="GIFQLHH"/>
<dbReference type="GO" id="GO:0043190">
    <property type="term" value="C:ATP-binding cassette (ABC) transporter complex"/>
    <property type="evidence" value="ECO:0007669"/>
    <property type="project" value="InterPro"/>
</dbReference>
<dbReference type="GO" id="GO:0140359">
    <property type="term" value="F:ABC-type transporter activity"/>
    <property type="evidence" value="ECO:0007669"/>
    <property type="project" value="InterPro"/>
</dbReference>
<dbReference type="GO" id="GO:0015920">
    <property type="term" value="P:lipopolysaccharide transport"/>
    <property type="evidence" value="ECO:0007669"/>
    <property type="project" value="TreeGrafter"/>
</dbReference>
<dbReference type="InterPro" id="IPR013525">
    <property type="entry name" value="ABC2_TM"/>
</dbReference>
<dbReference type="InterPro" id="IPR047817">
    <property type="entry name" value="ABC2_TM_bact-type"/>
</dbReference>
<dbReference type="InterPro" id="IPR000412">
    <property type="entry name" value="ABC_2_transport"/>
</dbReference>
<dbReference type="PANTHER" id="PTHR30413">
    <property type="entry name" value="INNER MEMBRANE TRANSPORT PERMEASE"/>
    <property type="match status" value="1"/>
</dbReference>
<dbReference type="PANTHER" id="PTHR30413:SF8">
    <property type="entry name" value="TRANSPORT PERMEASE PROTEIN"/>
    <property type="match status" value="1"/>
</dbReference>
<dbReference type="Pfam" id="PF01061">
    <property type="entry name" value="ABC2_membrane"/>
    <property type="match status" value="1"/>
</dbReference>
<dbReference type="PIRSF" id="PIRSF006648">
    <property type="entry name" value="DrrB"/>
    <property type="match status" value="1"/>
</dbReference>
<dbReference type="PRINTS" id="PR00164">
    <property type="entry name" value="ABC2TRNSPORT"/>
</dbReference>
<dbReference type="PROSITE" id="PS51012">
    <property type="entry name" value="ABC_TM2"/>
    <property type="match status" value="1"/>
</dbReference>
<name>KPSM1_ECOLX</name>
<organism>
    <name type="scientific">Escherichia coli</name>
    <dbReference type="NCBI Taxonomy" id="562"/>
    <lineage>
        <taxon>Bacteria</taxon>
        <taxon>Pseudomonadati</taxon>
        <taxon>Pseudomonadota</taxon>
        <taxon>Gammaproteobacteria</taxon>
        <taxon>Enterobacterales</taxon>
        <taxon>Enterobacteriaceae</taxon>
        <taxon>Escherichia</taxon>
    </lineage>
</organism>
<comment type="function">
    <text>KpsM and KpsT constitute a system for the transport of polysialic acid across the cytoplasmic membrane.</text>
</comment>
<comment type="subcellular location">
    <subcellularLocation>
        <location>Cell inner membrane</location>
        <topology>Multi-pass membrane protein</topology>
    </subcellularLocation>
</comment>
<comment type="similarity">
    <text evidence="2">Belongs to the ABC-2 integral membrane protein family.</text>
</comment>
<keyword id="KW-0997">Cell inner membrane</keyword>
<keyword id="KW-1003">Cell membrane</keyword>
<keyword id="KW-0472">Membrane</keyword>
<keyword id="KW-0812">Transmembrane</keyword>
<keyword id="KW-1133">Transmembrane helix</keyword>
<keyword id="KW-0813">Transport</keyword>
<proteinExistence type="evidence at protein level"/>
<protein>
    <recommendedName>
        <fullName>Polysialic acid transport protein KpsM</fullName>
    </recommendedName>
</protein>
<reference key="1">
    <citation type="journal article" date="1991" name="J. Bacteriol.">
        <title>Identification of two genes, kpsM and kpsT, in region 3 of the polysialic acid gene cluster of Escherichia coli K1.</title>
        <authorList>
            <person name="Pavelka M.S. Jr."/>
            <person name="Wright L.F."/>
            <person name="Silver R.P."/>
        </authorList>
    </citation>
    <scope>NUCLEOTIDE SEQUENCE [GENOMIC DNA]</scope>
    <source>
        <strain>K1</strain>
    </source>
</reference>
<reference key="2">
    <citation type="journal article" date="1994" name="Mol. Microbiol.">
        <title>Topological and mutational analysis of KpsM, the hydrophobic component of the ABC-transporter involved in the export of polysialic acid in Escherichia coli K1.</title>
        <authorList>
            <person name="Pigeon R.P."/>
            <person name="Silver R.P."/>
        </authorList>
    </citation>
    <scope>TOPOLOGY</scope>
</reference>
<accession>P23889</accession>
<gene>
    <name type="primary">kpsM</name>
</gene>
<evidence type="ECO:0000255" key="1">
    <source>
        <dbReference type="PROSITE-ProRule" id="PRU00442"/>
    </source>
</evidence>
<evidence type="ECO:0000305" key="2"/>
<evidence type="ECO:0000305" key="3">
    <source>
    </source>
</evidence>